<protein>
    <recommendedName>
        <fullName evidence="1">Thiamine kinase</fullName>
        <ecNumber evidence="1">2.7.1.89</ecNumber>
    </recommendedName>
</protein>
<evidence type="ECO:0000255" key="1">
    <source>
        <dbReference type="HAMAP-Rule" id="MF_01604"/>
    </source>
</evidence>
<proteinExistence type="inferred from homology"/>
<keyword id="KW-0067">ATP-binding</keyword>
<keyword id="KW-0418">Kinase</keyword>
<keyword id="KW-0547">Nucleotide-binding</keyword>
<keyword id="KW-1185">Reference proteome</keyword>
<keyword id="KW-0808">Transferase</keyword>
<feature type="chain" id="PRO_1000069406" description="Thiamine kinase">
    <location>
        <begin position="1"/>
        <end position="274"/>
    </location>
</feature>
<reference key="1">
    <citation type="journal article" date="2008" name="J. Bacteriol.">
        <title>The pangenome structure of Escherichia coli: comparative genomic analysis of E. coli commensal and pathogenic isolates.</title>
        <authorList>
            <person name="Rasko D.A."/>
            <person name="Rosovitz M.J."/>
            <person name="Myers G.S.A."/>
            <person name="Mongodin E.F."/>
            <person name="Fricke W.F."/>
            <person name="Gajer P."/>
            <person name="Crabtree J."/>
            <person name="Sebaihia M."/>
            <person name="Thomson N.R."/>
            <person name="Chaudhuri R."/>
            <person name="Henderson I.R."/>
            <person name="Sperandio V."/>
            <person name="Ravel J."/>
        </authorList>
    </citation>
    <scope>NUCLEOTIDE SEQUENCE [LARGE SCALE GENOMIC DNA]</scope>
    <source>
        <strain>E24377A / ETEC</strain>
    </source>
</reference>
<comment type="function">
    <text evidence="1">Catalyzes the ATP-dependent phosphorylation of thiamine to thiamine phosphate. Is involved in thiamine salvage.</text>
</comment>
<comment type="catalytic activity">
    <reaction evidence="1">
        <text>thiamine + ATP = thiamine phosphate + ADP + H(+)</text>
        <dbReference type="Rhea" id="RHEA:12012"/>
        <dbReference type="ChEBI" id="CHEBI:15378"/>
        <dbReference type="ChEBI" id="CHEBI:18385"/>
        <dbReference type="ChEBI" id="CHEBI:30616"/>
        <dbReference type="ChEBI" id="CHEBI:37575"/>
        <dbReference type="ChEBI" id="CHEBI:456216"/>
        <dbReference type="EC" id="2.7.1.89"/>
    </reaction>
    <physiologicalReaction direction="left-to-right" evidence="1">
        <dbReference type="Rhea" id="RHEA:12013"/>
    </physiologicalReaction>
</comment>
<comment type="pathway">
    <text evidence="1">Cofactor biosynthesis; thiamine diphosphate biosynthesis; thiamine phosphate from thiamine: step 1/1.</text>
</comment>
<comment type="similarity">
    <text evidence="1">Belongs to the thiamine kinase family.</text>
</comment>
<dbReference type="EC" id="2.7.1.89" evidence="1"/>
<dbReference type="EMBL" id="CP000800">
    <property type="protein sequence ID" value="ABV18195.1"/>
    <property type="molecule type" value="Genomic_DNA"/>
</dbReference>
<dbReference type="RefSeq" id="WP_001116551.1">
    <property type="nucleotide sequence ID" value="NC_009801.1"/>
</dbReference>
<dbReference type="SMR" id="A7ZKL0"/>
<dbReference type="KEGG" id="ecw:EcE24377A_1228"/>
<dbReference type="HOGENOM" id="CLU_055115_2_1_6"/>
<dbReference type="UniPathway" id="UPA00060">
    <property type="reaction ID" value="UER00596"/>
</dbReference>
<dbReference type="Proteomes" id="UP000001122">
    <property type="component" value="Chromosome"/>
</dbReference>
<dbReference type="GO" id="GO:0005524">
    <property type="term" value="F:ATP binding"/>
    <property type="evidence" value="ECO:0007669"/>
    <property type="project" value="UniProtKB-KW"/>
</dbReference>
<dbReference type="GO" id="GO:0019165">
    <property type="term" value="F:thiamine kinase activity"/>
    <property type="evidence" value="ECO:0007669"/>
    <property type="project" value="UniProtKB-UniRule"/>
</dbReference>
<dbReference type="GO" id="GO:0009229">
    <property type="term" value="P:thiamine diphosphate biosynthetic process"/>
    <property type="evidence" value="ECO:0007669"/>
    <property type="project" value="UniProtKB-UniRule"/>
</dbReference>
<dbReference type="GO" id="GO:0006772">
    <property type="term" value="P:thiamine metabolic process"/>
    <property type="evidence" value="ECO:0007669"/>
    <property type="project" value="InterPro"/>
</dbReference>
<dbReference type="FunFam" id="3.90.1200.10:FF:000004">
    <property type="entry name" value="Thiamine kinase"/>
    <property type="match status" value="1"/>
</dbReference>
<dbReference type="Gene3D" id="3.90.1200.10">
    <property type="match status" value="1"/>
</dbReference>
<dbReference type="HAMAP" id="MF_01604">
    <property type="entry name" value="Thiamine_kinase"/>
    <property type="match status" value="1"/>
</dbReference>
<dbReference type="InterPro" id="IPR002575">
    <property type="entry name" value="Aminoglycoside_PTrfase"/>
</dbReference>
<dbReference type="InterPro" id="IPR011009">
    <property type="entry name" value="Kinase-like_dom_sf"/>
</dbReference>
<dbReference type="InterPro" id="IPR014093">
    <property type="entry name" value="Thiamine_kinase"/>
</dbReference>
<dbReference type="NCBIfam" id="NF007620">
    <property type="entry name" value="PRK10271.1"/>
    <property type="match status" value="1"/>
</dbReference>
<dbReference type="NCBIfam" id="TIGR02721">
    <property type="entry name" value="ycfN_thiK"/>
    <property type="match status" value="1"/>
</dbReference>
<dbReference type="Pfam" id="PF01636">
    <property type="entry name" value="APH"/>
    <property type="match status" value="1"/>
</dbReference>
<dbReference type="SUPFAM" id="SSF56112">
    <property type="entry name" value="Protein kinase-like (PK-like)"/>
    <property type="match status" value="1"/>
</dbReference>
<name>THIK_ECO24</name>
<accession>A7ZKL0</accession>
<organism>
    <name type="scientific">Escherichia coli O139:H28 (strain E24377A / ETEC)</name>
    <dbReference type="NCBI Taxonomy" id="331111"/>
    <lineage>
        <taxon>Bacteria</taxon>
        <taxon>Pseudomonadati</taxon>
        <taxon>Pseudomonadota</taxon>
        <taxon>Gammaproteobacteria</taxon>
        <taxon>Enterobacterales</taxon>
        <taxon>Enterobacteriaceae</taxon>
        <taxon>Escherichia</taxon>
    </lineage>
</organism>
<sequence>MPFRSNNPIMRDELLSRFFPQFHPVTTFNSGLSGGSFLIEHQGQRFVVRQPHDPDAPQSAFLRQYRALSQLPASIAPKPHLYLRDWMVVDYLPGAVKTYLPDTNELAGLLYYLHQQPRFGWRITLLPLLELYWQQSDPARRTVGWLRMLKRLRKAREPRPLRLSPLHMDVHAGNLVHSASGLKLIDWEYAGDGDIALELAAVWVENTEQHRQLVNDYATRAKIYPAQLWRQVRRWFPWLLMLKAGWFEYRWRQTGDQQFIRLADDTWRQLLIKQ</sequence>
<gene>
    <name evidence="1" type="primary">thiK</name>
    <name type="ordered locus">EcE24377A_1228</name>
</gene>